<gene>
    <name evidence="1" type="primary">hemC</name>
    <name type="ordered locus">MCA3060</name>
</gene>
<sequence length="322" mass="34827">MRGSSFPGFPSTVASHTLRIATRKSPLALWQAEYVASRLRAAHPDLRVELVGMTTRGDKLLDAPLAKVGGKGLFVKELEQGLLEGRADIAVHSMKDVPVEFPEGLHLAAILEREDPRDALVSHRYRSFAELPADARIGTSSLRRQCQIKCRLPGCSLYDLRGNVNTRLAKLDAGEFDAIVLASAGLKRLGFQERIAETLTPEQCLPAIGQGAIGVECRSTDTRTNALLVPLHHPPTAWCVLAERAMNRRLDGGCQVPIAGFAQLEGDTLSLRGLVGNPDGSGIIRAEAVGHPSTFEALGKRVAEHLLDQGADEILRRVYATP</sequence>
<dbReference type="EC" id="2.5.1.61" evidence="1"/>
<dbReference type="EMBL" id="AE017282">
    <property type="protein sequence ID" value="AAU90858.1"/>
    <property type="status" value="ALT_INIT"/>
    <property type="molecule type" value="Genomic_DNA"/>
</dbReference>
<dbReference type="SMR" id="Q602K3"/>
<dbReference type="STRING" id="243233.MCA3060"/>
<dbReference type="KEGG" id="mca:MCA3060"/>
<dbReference type="eggNOG" id="COG0181">
    <property type="taxonomic scope" value="Bacteria"/>
</dbReference>
<dbReference type="HOGENOM" id="CLU_019704_0_2_6"/>
<dbReference type="UniPathway" id="UPA00251">
    <property type="reaction ID" value="UER00319"/>
</dbReference>
<dbReference type="Proteomes" id="UP000006821">
    <property type="component" value="Chromosome"/>
</dbReference>
<dbReference type="GO" id="GO:0005737">
    <property type="term" value="C:cytoplasm"/>
    <property type="evidence" value="ECO:0007669"/>
    <property type="project" value="TreeGrafter"/>
</dbReference>
<dbReference type="GO" id="GO:0004418">
    <property type="term" value="F:hydroxymethylbilane synthase activity"/>
    <property type="evidence" value="ECO:0007669"/>
    <property type="project" value="UniProtKB-UniRule"/>
</dbReference>
<dbReference type="GO" id="GO:0006782">
    <property type="term" value="P:protoporphyrinogen IX biosynthetic process"/>
    <property type="evidence" value="ECO:0007669"/>
    <property type="project" value="UniProtKB-UniRule"/>
</dbReference>
<dbReference type="CDD" id="cd13646">
    <property type="entry name" value="PBP2_EcHMBS_like"/>
    <property type="match status" value="1"/>
</dbReference>
<dbReference type="FunFam" id="3.30.160.40:FF:000002">
    <property type="entry name" value="Porphobilinogen deaminase"/>
    <property type="match status" value="1"/>
</dbReference>
<dbReference type="FunFam" id="3.40.190.10:FF:000004">
    <property type="entry name" value="Porphobilinogen deaminase"/>
    <property type="match status" value="1"/>
</dbReference>
<dbReference type="FunFam" id="3.40.190.10:FF:000005">
    <property type="entry name" value="Porphobilinogen deaminase"/>
    <property type="match status" value="1"/>
</dbReference>
<dbReference type="Gene3D" id="3.40.190.10">
    <property type="entry name" value="Periplasmic binding protein-like II"/>
    <property type="match status" value="2"/>
</dbReference>
<dbReference type="Gene3D" id="3.30.160.40">
    <property type="entry name" value="Porphobilinogen deaminase, C-terminal domain"/>
    <property type="match status" value="1"/>
</dbReference>
<dbReference type="HAMAP" id="MF_00260">
    <property type="entry name" value="Porphobil_deam"/>
    <property type="match status" value="1"/>
</dbReference>
<dbReference type="InterPro" id="IPR000860">
    <property type="entry name" value="HemC"/>
</dbReference>
<dbReference type="InterPro" id="IPR022419">
    <property type="entry name" value="Porphobilin_deaminase_cofac_BS"/>
</dbReference>
<dbReference type="InterPro" id="IPR022417">
    <property type="entry name" value="Porphobilin_deaminase_N"/>
</dbReference>
<dbReference type="InterPro" id="IPR022418">
    <property type="entry name" value="Porphobilinogen_deaminase_C"/>
</dbReference>
<dbReference type="InterPro" id="IPR036803">
    <property type="entry name" value="Porphobilinogen_deaminase_C_sf"/>
</dbReference>
<dbReference type="NCBIfam" id="TIGR00212">
    <property type="entry name" value="hemC"/>
    <property type="match status" value="1"/>
</dbReference>
<dbReference type="PANTHER" id="PTHR11557">
    <property type="entry name" value="PORPHOBILINOGEN DEAMINASE"/>
    <property type="match status" value="1"/>
</dbReference>
<dbReference type="PANTHER" id="PTHR11557:SF0">
    <property type="entry name" value="PORPHOBILINOGEN DEAMINASE"/>
    <property type="match status" value="1"/>
</dbReference>
<dbReference type="Pfam" id="PF01379">
    <property type="entry name" value="Porphobil_deam"/>
    <property type="match status" value="1"/>
</dbReference>
<dbReference type="Pfam" id="PF03900">
    <property type="entry name" value="Porphobil_deamC"/>
    <property type="match status" value="1"/>
</dbReference>
<dbReference type="PIRSF" id="PIRSF001438">
    <property type="entry name" value="4pyrrol_synth_OHMeBilane_synth"/>
    <property type="match status" value="1"/>
</dbReference>
<dbReference type="PRINTS" id="PR00151">
    <property type="entry name" value="PORPHBDMNASE"/>
</dbReference>
<dbReference type="SUPFAM" id="SSF53850">
    <property type="entry name" value="Periplasmic binding protein-like II"/>
    <property type="match status" value="1"/>
</dbReference>
<dbReference type="SUPFAM" id="SSF54782">
    <property type="entry name" value="Porphobilinogen deaminase (hydroxymethylbilane synthase), C-terminal domain"/>
    <property type="match status" value="1"/>
</dbReference>
<dbReference type="PROSITE" id="PS00533">
    <property type="entry name" value="PORPHOBILINOGEN_DEAM"/>
    <property type="match status" value="1"/>
</dbReference>
<feature type="chain" id="PRO_0000142956" description="Porphobilinogen deaminase">
    <location>
        <begin position="1"/>
        <end position="322"/>
    </location>
</feature>
<feature type="modified residue" description="S-(dipyrrolylmethanemethyl)cysteine" evidence="1">
    <location>
        <position position="254"/>
    </location>
</feature>
<keyword id="KW-0627">Porphyrin biosynthesis</keyword>
<keyword id="KW-1185">Reference proteome</keyword>
<keyword id="KW-0808">Transferase</keyword>
<evidence type="ECO:0000255" key="1">
    <source>
        <dbReference type="HAMAP-Rule" id="MF_00260"/>
    </source>
</evidence>
<evidence type="ECO:0000305" key="2"/>
<organism>
    <name type="scientific">Methylococcus capsulatus (strain ATCC 33009 / NCIMB 11132 / Bath)</name>
    <dbReference type="NCBI Taxonomy" id="243233"/>
    <lineage>
        <taxon>Bacteria</taxon>
        <taxon>Pseudomonadati</taxon>
        <taxon>Pseudomonadota</taxon>
        <taxon>Gammaproteobacteria</taxon>
        <taxon>Methylococcales</taxon>
        <taxon>Methylococcaceae</taxon>
        <taxon>Methylococcus</taxon>
    </lineage>
</organism>
<comment type="function">
    <text evidence="1">Tetrapolymerization of the monopyrrole PBG into the hydroxymethylbilane pre-uroporphyrinogen in several discrete steps.</text>
</comment>
<comment type="catalytic activity">
    <reaction evidence="1">
        <text>4 porphobilinogen + H2O = hydroxymethylbilane + 4 NH4(+)</text>
        <dbReference type="Rhea" id="RHEA:13185"/>
        <dbReference type="ChEBI" id="CHEBI:15377"/>
        <dbReference type="ChEBI" id="CHEBI:28938"/>
        <dbReference type="ChEBI" id="CHEBI:57845"/>
        <dbReference type="ChEBI" id="CHEBI:58126"/>
        <dbReference type="EC" id="2.5.1.61"/>
    </reaction>
</comment>
<comment type="cofactor">
    <cofactor evidence="1">
        <name>dipyrromethane</name>
        <dbReference type="ChEBI" id="CHEBI:60342"/>
    </cofactor>
    <text evidence="1">Binds 1 dipyrromethane group covalently.</text>
</comment>
<comment type="pathway">
    <text evidence="1">Porphyrin-containing compound metabolism; protoporphyrin-IX biosynthesis; coproporphyrinogen-III from 5-aminolevulinate: step 2/4.</text>
</comment>
<comment type="subunit">
    <text evidence="1">Monomer.</text>
</comment>
<comment type="miscellaneous">
    <text evidence="1">The porphobilinogen subunits are added to the dipyrromethane group.</text>
</comment>
<comment type="similarity">
    <text evidence="1">Belongs to the HMBS family.</text>
</comment>
<comment type="sequence caution" evidence="2">
    <conflict type="erroneous initiation">
        <sequence resource="EMBL-CDS" id="AAU90858"/>
    </conflict>
</comment>
<reference key="1">
    <citation type="journal article" date="2004" name="PLoS Biol.">
        <title>Genomic insights into methanotrophy: the complete genome sequence of Methylococcus capsulatus (Bath).</title>
        <authorList>
            <person name="Ward N.L."/>
            <person name="Larsen O."/>
            <person name="Sakwa J."/>
            <person name="Bruseth L."/>
            <person name="Khouri H.M."/>
            <person name="Durkin A.S."/>
            <person name="Dimitrov G."/>
            <person name="Jiang L."/>
            <person name="Scanlan D."/>
            <person name="Kang K.H."/>
            <person name="Lewis M.R."/>
            <person name="Nelson K.E."/>
            <person name="Methe B.A."/>
            <person name="Wu M."/>
            <person name="Heidelberg J.F."/>
            <person name="Paulsen I.T."/>
            <person name="Fouts D.E."/>
            <person name="Ravel J."/>
            <person name="Tettelin H."/>
            <person name="Ren Q."/>
            <person name="Read T.D."/>
            <person name="DeBoy R.T."/>
            <person name="Seshadri R."/>
            <person name="Salzberg S.L."/>
            <person name="Jensen H.B."/>
            <person name="Birkeland N.K."/>
            <person name="Nelson W.C."/>
            <person name="Dodson R.J."/>
            <person name="Grindhaug S.H."/>
            <person name="Holt I.E."/>
            <person name="Eidhammer I."/>
            <person name="Jonasen I."/>
            <person name="Vanaken S."/>
            <person name="Utterback T.R."/>
            <person name="Feldblyum T.V."/>
            <person name="Fraser C.M."/>
            <person name="Lillehaug J.R."/>
            <person name="Eisen J.A."/>
        </authorList>
    </citation>
    <scope>NUCLEOTIDE SEQUENCE [LARGE SCALE GENOMIC DNA]</scope>
    <source>
        <strain>ATCC 33009 / NCIMB 11132 / Bath</strain>
    </source>
</reference>
<name>HEM3_METCA</name>
<accession>Q602K3</accession>
<protein>
    <recommendedName>
        <fullName evidence="1">Porphobilinogen deaminase</fullName>
        <shortName evidence="1">PBG</shortName>
        <ecNumber evidence="1">2.5.1.61</ecNumber>
    </recommendedName>
    <alternativeName>
        <fullName evidence="1">Hydroxymethylbilane synthase</fullName>
        <shortName evidence="1">HMBS</shortName>
    </alternativeName>
    <alternativeName>
        <fullName evidence="1">Pre-uroporphyrinogen synthase</fullName>
    </alternativeName>
</protein>
<proteinExistence type="inferred from homology"/>